<keyword id="KW-1185">Reference proteome</keyword>
<gene>
    <name type="primary">SIFV0058</name>
</gene>
<dbReference type="EMBL" id="AF440571">
    <property type="protein sequence ID" value="AAL27767.1"/>
    <property type="molecule type" value="Genomic_DNA"/>
</dbReference>
<dbReference type="RefSeq" id="NP_445721.1">
    <property type="nucleotide sequence ID" value="NC_003214.2"/>
</dbReference>
<dbReference type="GeneID" id="922322"/>
<dbReference type="KEGG" id="vg:922322"/>
<dbReference type="Proteomes" id="UP000007017">
    <property type="component" value="Segment"/>
</dbReference>
<feature type="chain" id="PRO_0000385415" description="Uncharacterized protein 58">
    <location>
        <begin position="1"/>
        <end position="212"/>
    </location>
</feature>
<organismHost>
    <name type="scientific">Saccharolobus islandicus</name>
    <name type="common">Sulfolobus islandicus</name>
    <dbReference type="NCBI Taxonomy" id="43080"/>
</organismHost>
<proteinExistence type="predicted"/>
<protein>
    <recommendedName>
        <fullName>Uncharacterized protein 58</fullName>
    </recommendedName>
</protein>
<organism>
    <name type="scientific">Sulfolobus islandicus filamentous virus (isolate Iceland/Hveragerdi)</name>
    <name type="common">SIFV</name>
    <dbReference type="NCBI Taxonomy" id="654908"/>
    <lineage>
        <taxon>Viruses</taxon>
        <taxon>Adnaviria</taxon>
        <taxon>Zilligvirae</taxon>
        <taxon>Taleaviricota</taxon>
        <taxon>Tokiviricetes</taxon>
        <taxon>Ligamenvirales</taxon>
        <taxon>Lipothrixviridae</taxon>
        <taxon>Betalipothrixvirus</taxon>
        <taxon>Sulfolobus islandicus filamentous virus</taxon>
    </lineage>
</organism>
<reference key="1">
    <citation type="journal article" date="2000" name="Virology">
        <title>A novel lipothrixvirus, SIFV, of the extremely thermophilic crenarchaeon Sulfolobus.</title>
        <authorList>
            <person name="Arnold H.P."/>
            <person name="Zillig W."/>
            <person name="Ziese U."/>
            <person name="Holz I."/>
            <person name="Crosby M."/>
            <person name="Utterback T."/>
            <person name="Weidmann J.F."/>
            <person name="Umayam L.A."/>
            <person name="Teffera K."/>
            <person name="Kristjanson J.K."/>
            <person name="Klenk H.P."/>
            <person name="Nelson K.E."/>
            <person name="Fraser C.M."/>
        </authorList>
    </citation>
    <scope>NUCLEOTIDE SEQUENCE [GENOMIC DNA]</scope>
</reference>
<sequence length="212" mass="22655">MSSNLAYLVYESMTSGLSSVSFYVLDTSNNQHPFHVLVTSENTYYYFDSSESVYIATSFNISVNGNVILTVSLNNLQKTGNMTLIVVVTLDIGTSLPGNLGTYVIQAIQALFAGVLINLGCSATAYYTIVNEQTGSSSTGSTGLSFSLTNDSQFVASGSISYSQYEVVNITQIIISCSTINVKENMITNTLTSSECTSSSGCTYTITITFTS</sequence>
<name>Y058_SIFVH</name>
<accession>Q914H4</accession>